<dbReference type="EC" id="2.1.1.300" evidence="2 3"/>
<dbReference type="EMBL" id="EU883010">
    <property type="protein sequence ID" value="ACO90251.1"/>
    <property type="molecule type" value="mRNA"/>
</dbReference>
<dbReference type="PDB" id="5KN4">
    <property type="method" value="X-ray"/>
    <property type="resolution" value="1.99 A"/>
    <property type="chains" value="A/B=1-356"/>
</dbReference>
<dbReference type="PDB" id="5KOC">
    <property type="method" value="X-ray"/>
    <property type="resolution" value="2.29 A"/>
    <property type="chains" value="A/B=1-356"/>
</dbReference>
<dbReference type="PDB" id="5KOK">
    <property type="method" value="X-ray"/>
    <property type="resolution" value="1.79 A"/>
    <property type="chains" value="A/B=1-356"/>
</dbReference>
<dbReference type="PDB" id="5KPC">
    <property type="method" value="X-ray"/>
    <property type="resolution" value="2.50 A"/>
    <property type="chains" value="A/B=1-356"/>
</dbReference>
<dbReference type="PDB" id="5KPG">
    <property type="method" value="X-ray"/>
    <property type="resolution" value="1.60 A"/>
    <property type="chains" value="A/B=1-356"/>
</dbReference>
<dbReference type="PDBsum" id="5KN4"/>
<dbReference type="PDBsum" id="5KOC"/>
<dbReference type="PDBsum" id="5KOK"/>
<dbReference type="PDBsum" id="5KPC"/>
<dbReference type="PDBsum" id="5KPG"/>
<dbReference type="SMR" id="C3SBW0"/>
<dbReference type="KEGG" id="ag:ACO90251"/>
<dbReference type="BRENDA" id="2.1.1.300">
    <property type="organism ID" value="9013"/>
</dbReference>
<dbReference type="SABIO-RK" id="C3SBW0"/>
<dbReference type="GO" id="GO:0005737">
    <property type="term" value="C:cytoplasm"/>
    <property type="evidence" value="ECO:0007669"/>
    <property type="project" value="UniProtKB-SubCell"/>
</dbReference>
<dbReference type="GO" id="GO:0008168">
    <property type="term" value="F:methyltransferase activity"/>
    <property type="evidence" value="ECO:0007669"/>
    <property type="project" value="UniProtKB-KW"/>
</dbReference>
<dbReference type="GO" id="GO:0032259">
    <property type="term" value="P:methylation"/>
    <property type="evidence" value="ECO:0007669"/>
    <property type="project" value="UniProtKB-KW"/>
</dbReference>
<dbReference type="CDD" id="cd02440">
    <property type="entry name" value="AdoMet_MTases"/>
    <property type="match status" value="1"/>
</dbReference>
<dbReference type="FunFam" id="3.40.50.150:FF:000554">
    <property type="entry name" value="Cation-transporting ATPase"/>
    <property type="match status" value="1"/>
</dbReference>
<dbReference type="Gene3D" id="3.40.50.150">
    <property type="entry name" value="Vaccinia Virus protein VP39"/>
    <property type="match status" value="1"/>
</dbReference>
<dbReference type="InterPro" id="IPR029063">
    <property type="entry name" value="SAM-dependent_MTases_sf"/>
</dbReference>
<dbReference type="PANTHER" id="PTHR43832">
    <property type="match status" value="1"/>
</dbReference>
<dbReference type="PANTHER" id="PTHR43832:SF1">
    <property type="entry name" value="S-ADENOSYL-L-METHIONINE-DEPENDENT METHYLTRANSFERASES SUPERFAMILY PROTEIN"/>
    <property type="match status" value="1"/>
</dbReference>
<dbReference type="Pfam" id="PF02353">
    <property type="entry name" value="CMAS"/>
    <property type="match status" value="1"/>
</dbReference>
<dbReference type="SUPFAM" id="SSF53335">
    <property type="entry name" value="S-adenosyl-L-methionine-dependent methyltransferases"/>
    <property type="match status" value="1"/>
</dbReference>
<protein>
    <recommendedName>
        <fullName evidence="4">Pavine N-methyltransferase</fullName>
        <shortName evidence="4">TfPavNMT</shortName>
        <ecNumber evidence="2 3">2.1.1.300</ecNumber>
    </recommendedName>
</protein>
<accession>C3SBW0</accession>
<reference key="1">
    <citation type="journal article" date="2009" name="Plant J.">
        <title>Targeted metabolite and transcript profiling for elucidating enzyme function: isolation of novel N-methyltransferases from three benzylisoquinoline alkaloid-producing species.</title>
        <authorList>
            <consortium name="Natural Products Genomics Resource (NAPGEN)"/>
            <person name="Liscombe D.K."/>
            <person name="Ziegler J."/>
            <person name="Schmidt J."/>
            <person name="Ammer C."/>
            <person name="Facchini P.J."/>
        </authorList>
    </citation>
    <scope>NUCLEOTIDE SEQUENCE [MRNA]</scope>
    <scope>FUNCTION</scope>
    <scope>CATALYTIC ACTIVITY</scope>
    <scope>BIOPHYSICOCHEMICAL PROPERTIES</scope>
    <scope>INDUCTION</scope>
    <scope>PATHWAY</scope>
</reference>
<reference evidence="8 9 10 11 12" key="2">
    <citation type="journal article" date="2016" name="J. Biol. Chem.">
        <title>Structural and functional studies of pavine N-methyltransferase from Thalictrum flavum reveal novel insights into substrate recognition and catalytic mechanism.</title>
        <authorList>
            <person name="Torres M.A."/>
            <person name="Hoffarth E."/>
            <person name="Eugenio L."/>
            <person name="Savtchouk J."/>
            <person name="Chen X."/>
            <person name="Morris J.S."/>
            <person name="Facchini P.J."/>
            <person name="Ng K.K."/>
        </authorList>
    </citation>
    <scope>X-RAY CRYSTALLOGRAPHY (1.60 ANGSTROMS) OF WILD-TYPE APOENZYME AND MUTANT ALA-206 IN COMPLEXES WITH S-ADENOSYL-L-METHIONINE; S-ADENOSYL-L-HOMOCYSTEINE; (R)-TETRAHYDROPAPAVERINE AND (S)-TETRAHYDROPAPAVERINE</scope>
    <scope>FUNCTION</scope>
    <scope>CATALYTIC ACTIVITY</scope>
    <scope>SUBSTRATE SPECIFICITY</scope>
    <scope>ACTIVITY REGULATION</scope>
    <scope>SUBUNIT</scope>
    <scope>MUTAGENESIS OF TYR-79; GLU-80; GLU-205 AND HIS-206</scope>
</reference>
<gene>
    <name evidence="4" type="primary">PavNMT</name>
</gene>
<comment type="function">
    <text evidence="2 3">N-methyltransferase with a substrate preference for (+-)-pavine and (S)-reticuline, but also active with the protoberberines scoulerine and stylopine and, to a lesser extent, tetrahydropapaverine (THP) and tetrahydropalmatine (PubMed:19624470, PubMed:27573242). Is not active on (R)-reticuline, cryptopine, glaucine, codeine, canadaline, noscapine and berbamine (PubMed:27573242).</text>
</comment>
<comment type="catalytic activity">
    <reaction evidence="2 3">
        <text>(+-)-pavine + S-adenosyl-L-methionine = N-methylpavine + S-adenosyl-L-homocysteine + H(+)</text>
        <dbReference type="Rhea" id="RHEA:39979"/>
        <dbReference type="ChEBI" id="CHEBI:15378"/>
        <dbReference type="ChEBI" id="CHEBI:57856"/>
        <dbReference type="ChEBI" id="CHEBI:59789"/>
        <dbReference type="ChEBI" id="CHEBI:76921"/>
        <dbReference type="ChEBI" id="CHEBI:76922"/>
        <dbReference type="EC" id="2.1.1.300"/>
    </reaction>
    <physiologicalReaction direction="left-to-right" evidence="6 7">
        <dbReference type="Rhea" id="RHEA:39980"/>
    </physiologicalReaction>
</comment>
<comment type="catalytic activity">
    <reaction evidence="3">
        <text>(S)-reticuline + S-adenosyl-L-methionine = (S)-tembetarine + S-adenosyl-L-homocysteine + H(+)</text>
        <dbReference type="Rhea" id="RHEA:51520"/>
        <dbReference type="ChEBI" id="CHEBI:15378"/>
        <dbReference type="ChEBI" id="CHEBI:57856"/>
        <dbReference type="ChEBI" id="CHEBI:57873"/>
        <dbReference type="ChEBI" id="CHEBI:59789"/>
        <dbReference type="ChEBI" id="CHEBI:134199"/>
    </reaction>
    <physiologicalReaction direction="left-to-right" evidence="7">
        <dbReference type="Rhea" id="RHEA:51521"/>
    </physiologicalReaction>
</comment>
<comment type="catalytic activity">
    <reaction evidence="2 3">
        <text>(S)-stylopine + S-adenosyl-L-methionine = (S)-cis-N-methylstylopine + S-adenosyl-L-homocysteine</text>
        <dbReference type="Rhea" id="RHEA:75975"/>
        <dbReference type="ChEBI" id="CHEBI:444"/>
        <dbReference type="ChEBI" id="CHEBI:18285"/>
        <dbReference type="ChEBI" id="CHEBI:57856"/>
        <dbReference type="ChEBI" id="CHEBI:59789"/>
    </reaction>
    <physiologicalReaction direction="left-to-right" evidence="6 7">
        <dbReference type="Rhea" id="RHEA:75976"/>
    </physiologicalReaction>
</comment>
<comment type="catalytic activity">
    <reaction evidence="2 3">
        <text>(S)-scoulerine + S-adenosyl-L-methionine = (S)-cis-N-methylscoulerine + S-adenosyl-L-homocysteine</text>
        <dbReference type="Rhea" id="RHEA:76051"/>
        <dbReference type="ChEBI" id="CHEBI:17129"/>
        <dbReference type="ChEBI" id="CHEBI:57856"/>
        <dbReference type="ChEBI" id="CHEBI:59789"/>
        <dbReference type="ChEBI" id="CHEBI:76923"/>
        <dbReference type="EC" id="2.1.1.300"/>
    </reaction>
    <physiologicalReaction direction="left-to-right" evidence="6 7">
        <dbReference type="Rhea" id="RHEA:76052"/>
    </physiologicalReaction>
</comment>
<comment type="catalytic activity">
    <reaction evidence="3">
        <text>(S)-tetrahydropapaverine + S-adenosyl-L-methionine = (S)-N-methyltetrahydropapaverine + S-adenosyl-L-homocysteine + H(+)</text>
        <dbReference type="Rhea" id="RHEA:51548"/>
        <dbReference type="ChEBI" id="CHEBI:15378"/>
        <dbReference type="ChEBI" id="CHEBI:57856"/>
        <dbReference type="ChEBI" id="CHEBI:59789"/>
        <dbReference type="ChEBI" id="CHEBI:195218"/>
        <dbReference type="ChEBI" id="CHEBI:195219"/>
    </reaction>
    <physiologicalReaction direction="left-to-right" evidence="7">
        <dbReference type="Rhea" id="RHEA:51549"/>
    </physiologicalReaction>
</comment>
<comment type="catalytic activity">
    <reaction evidence="2">
        <text>(S)-tetrahydropalmatine + S-adenosyl-L-methionine = (S)-cis-N-methyltetrahydropalmatine + S-adenosyl-L-homocysteine</text>
        <dbReference type="Rhea" id="RHEA:76047"/>
        <dbReference type="ChEBI" id="CHEBI:16563"/>
        <dbReference type="ChEBI" id="CHEBI:57856"/>
        <dbReference type="ChEBI" id="CHEBI:59789"/>
        <dbReference type="ChEBI" id="CHEBI:194514"/>
    </reaction>
    <physiologicalReaction direction="left-to-right" evidence="6">
        <dbReference type="Rhea" id="RHEA:76048"/>
    </physiologicalReaction>
</comment>
<comment type="activity regulation">
    <text evidence="3">In the presence of a racemic mixture of tetrahydropapaverine (THP), one molecule of (S)-THP binds in a productive mode, while one molecule of (R)-THP is bound next to it in a non-productive mode. The (R)-THP seems to inhibit the release of products from the enzyme when higher concentrations of the racemic substrate are added to the reaction.</text>
</comment>
<comment type="biophysicochemical properties">
    <kinetics>
        <KM evidence="2">47 uM for (+-)-pavine</KM>
        <KM evidence="3">16 uM for (R,S)-tetrahydropapaverine</KM>
        <Vmax evidence="2">0.001 pmol/sec/mg enzyme with (+-)-pavine as substrate</Vmax>
        <text evidence="2 3">kcat is 0.00005 sec(-1) with (+-)-pavine as substrate (PubMed:19624470). kcat is 0.00079 sec(-1) with (R,S)-tetrahydropapaverine as substrate (PubMed:27573242).</text>
    </kinetics>
</comment>
<comment type="pathway">
    <text evidence="2">Alkaloid biosynthesis.</text>
</comment>
<comment type="subunit">
    <text evidence="3">Homodimer.</text>
</comment>
<comment type="subcellular location">
    <subcellularLocation>
        <location evidence="6">Cytoplasm</location>
    </subcellularLocation>
</comment>
<comment type="induction">
    <text evidence="2">Not induced by elicitor treatment.</text>
</comment>
<comment type="similarity">
    <text evidence="5">Belongs to the CFA/CMAS family.</text>
</comment>
<feature type="chain" id="PRO_0000411114" description="Pavine N-methyltransferase">
    <location>
        <begin position="1"/>
        <end position="356"/>
    </location>
</feature>
<feature type="active site" evidence="1">
    <location>
        <position position="331"/>
    </location>
</feature>
<feature type="binding site" evidence="3 10 12">
    <location>
        <position position="96"/>
    </location>
    <ligand>
        <name>S-adenosyl-L-homocysteine</name>
        <dbReference type="ChEBI" id="CHEBI:57856"/>
    </ligand>
</feature>
<feature type="binding site" evidence="3 9">
    <location>
        <position position="96"/>
    </location>
    <ligand>
        <name>S-adenosyl-L-methionine</name>
        <dbReference type="ChEBI" id="CHEBI:59789"/>
    </ligand>
</feature>
<feature type="binding site" evidence="3 10 12">
    <location>
        <position position="97"/>
    </location>
    <ligand>
        <name>S-adenosyl-L-homocysteine</name>
        <dbReference type="ChEBI" id="CHEBI:57856"/>
    </ligand>
</feature>
<feature type="binding site" evidence="3 9">
    <location>
        <position position="97"/>
    </location>
    <ligand>
        <name>S-adenosyl-L-methionine</name>
        <dbReference type="ChEBI" id="CHEBI:59789"/>
    </ligand>
</feature>
<feature type="binding site" evidence="3 10 12">
    <location>
        <position position="135"/>
    </location>
    <ligand>
        <name>S-adenosyl-L-homocysteine</name>
        <dbReference type="ChEBI" id="CHEBI:57856"/>
    </ligand>
</feature>
<feature type="binding site" evidence="3 9">
    <location>
        <position position="135"/>
    </location>
    <ligand>
        <name>S-adenosyl-L-methionine</name>
        <dbReference type="ChEBI" id="CHEBI:59789"/>
    </ligand>
</feature>
<feature type="binding site" evidence="3 10 12">
    <location>
        <position position="159"/>
    </location>
    <ligand>
        <name>S-adenosyl-L-homocysteine</name>
        <dbReference type="ChEBI" id="CHEBI:57856"/>
    </ligand>
</feature>
<feature type="binding site" evidence="3 9">
    <location>
        <position position="159"/>
    </location>
    <ligand>
        <name>S-adenosyl-L-methionine</name>
        <dbReference type="ChEBI" id="CHEBI:59789"/>
    </ligand>
</feature>
<feature type="binding site" evidence="3 10">
    <location>
        <position position="163"/>
    </location>
    <ligand>
        <name>S-adenosyl-L-homocysteine</name>
        <dbReference type="ChEBI" id="CHEBI:57856"/>
    </ligand>
</feature>
<feature type="binding site" evidence="3 9">
    <location>
        <position position="163"/>
    </location>
    <ligand>
        <name>S-adenosyl-L-methionine</name>
        <dbReference type="ChEBI" id="CHEBI:59789"/>
    </ligand>
</feature>
<feature type="binding site" evidence="3 10 12">
    <location>
        <position position="185"/>
    </location>
    <ligand>
        <name>S-adenosyl-L-homocysteine</name>
        <dbReference type="ChEBI" id="CHEBI:57856"/>
    </ligand>
</feature>
<feature type="binding site" evidence="3 9">
    <location>
        <position position="185"/>
    </location>
    <ligand>
        <name>S-adenosyl-L-methionine</name>
        <dbReference type="ChEBI" id="CHEBI:59789"/>
    </ligand>
</feature>
<feature type="binding site" evidence="3 10 12">
    <location>
        <position position="186"/>
    </location>
    <ligand>
        <name>S-adenosyl-L-homocysteine</name>
        <dbReference type="ChEBI" id="CHEBI:57856"/>
    </ligand>
</feature>
<feature type="binding site" evidence="3 9">
    <location>
        <position position="186"/>
    </location>
    <ligand>
        <name>S-adenosyl-L-methionine</name>
        <dbReference type="ChEBI" id="CHEBI:59789"/>
    </ligand>
</feature>
<feature type="binding site" evidence="3 10 12">
    <location>
        <position position="201"/>
    </location>
    <ligand>
        <name>S-adenosyl-L-homocysteine</name>
        <dbReference type="ChEBI" id="CHEBI:57856"/>
    </ligand>
</feature>
<feature type="binding site" evidence="3 9">
    <location>
        <position position="201"/>
    </location>
    <ligand>
        <name>S-adenosyl-L-methionine</name>
        <dbReference type="ChEBI" id="CHEBI:59789"/>
    </ligand>
</feature>
<feature type="binding site" evidence="3 10">
    <location>
        <position position="205"/>
    </location>
    <ligand>
        <name>(S)-tetrahydropapaverine</name>
        <dbReference type="ChEBI" id="CHEBI:195219"/>
    </ligand>
</feature>
<feature type="mutagenesis site" description="Loss of catalytic activity with (S)-reticuline and racemic pavine, but increased catalytic activity with racemic tetrahydropapaverine." evidence="3">
    <original>Y</original>
    <variation>A</variation>
    <location>
        <position position="79"/>
    </location>
</feature>
<feature type="mutagenesis site" description="Increased catalytic activity with (S)-reticuline, racemic pavine and racemic tetrahydropapaverine." evidence="3">
    <original>E</original>
    <variation>A</variation>
    <location>
        <position position="80"/>
    </location>
</feature>
<feature type="mutagenesis site" description="Strongly decreased catalytic activity. Over 90% decreased catalytic activity; when associated with A-206." evidence="3">
    <original>E</original>
    <variation>A</variation>
    <location>
        <position position="205"/>
    </location>
</feature>
<feature type="mutagenesis site" description="Strongly decreased catalytic activity. Over 90% decreased catalytic activity; when associated with A-205." evidence="3">
    <original>H</original>
    <variation>A</variation>
    <location>
        <position position="206"/>
    </location>
</feature>
<feature type="helix" evidence="15">
    <location>
        <begin position="11"/>
        <end position="19"/>
    </location>
</feature>
<feature type="helix" evidence="15">
    <location>
        <begin position="25"/>
        <end position="43"/>
    </location>
</feature>
<feature type="helix" evidence="15">
    <location>
        <begin position="48"/>
        <end position="62"/>
    </location>
</feature>
<feature type="helix" evidence="13">
    <location>
        <begin position="73"/>
        <end position="78"/>
    </location>
</feature>
<feature type="helix" evidence="15">
    <location>
        <begin position="83"/>
        <end position="89"/>
    </location>
</feature>
<feature type="strand" evidence="15">
    <location>
        <begin position="102"/>
        <end position="105"/>
    </location>
</feature>
<feature type="helix" evidence="15">
    <location>
        <begin position="108"/>
        <end position="122"/>
    </location>
</feature>
<feature type="strand" evidence="15">
    <location>
        <begin position="130"/>
        <end position="134"/>
    </location>
</feature>
<feature type="helix" evidence="15">
    <location>
        <begin position="140"/>
        <end position="148"/>
    </location>
</feature>
<feature type="strand" evidence="15">
    <location>
        <begin position="153"/>
        <end position="159"/>
    </location>
</feature>
<feature type="helix" evidence="15">
    <location>
        <begin position="161"/>
        <end position="173"/>
    </location>
</feature>
<feature type="strand" evidence="15">
    <location>
        <begin position="178"/>
        <end position="183"/>
    </location>
</feature>
<feature type="helix" evidence="15">
    <location>
        <begin position="186"/>
        <end position="188"/>
    </location>
</feature>
<feature type="strand" evidence="15">
    <location>
        <begin position="195"/>
        <end position="202"/>
    </location>
</feature>
<feature type="helix" evidence="15">
    <location>
        <begin position="204"/>
        <end position="206"/>
    </location>
</feature>
<feature type="helix" evidence="15">
    <location>
        <begin position="210"/>
        <end position="218"/>
    </location>
</feature>
<feature type="strand" evidence="15">
    <location>
        <begin position="221"/>
        <end position="236"/>
    </location>
</feature>
<feature type="strand" evidence="14">
    <location>
        <begin position="244"/>
        <end position="246"/>
    </location>
</feature>
<feature type="helix" evidence="15">
    <location>
        <begin position="250"/>
        <end position="254"/>
    </location>
</feature>
<feature type="strand" evidence="15">
    <location>
        <begin position="261"/>
        <end position="264"/>
    </location>
</feature>
<feature type="helix" evidence="15">
    <location>
        <begin position="267"/>
        <end position="270"/>
    </location>
</feature>
<feature type="strand" evidence="15">
    <location>
        <begin position="273"/>
        <end position="283"/>
    </location>
</feature>
<feature type="helix" evidence="15">
    <location>
        <begin position="286"/>
        <end position="301"/>
    </location>
</feature>
<feature type="helix" evidence="15">
    <location>
        <begin position="303"/>
        <end position="314"/>
    </location>
</feature>
<feature type="helix" evidence="15">
    <location>
        <begin position="317"/>
        <end position="343"/>
    </location>
</feature>
<feature type="strand" evidence="15">
    <location>
        <begin position="345"/>
        <end position="355"/>
    </location>
</feature>
<organism>
    <name type="scientific">Thalictrum flavum subsp. glaucum</name>
    <name type="common">Yellow meadow rue</name>
    <dbReference type="NCBI Taxonomy" id="150095"/>
    <lineage>
        <taxon>Eukaryota</taxon>
        <taxon>Viridiplantae</taxon>
        <taxon>Streptophyta</taxon>
        <taxon>Embryophyta</taxon>
        <taxon>Tracheophyta</taxon>
        <taxon>Spermatophyta</taxon>
        <taxon>Magnoliopsida</taxon>
        <taxon>Ranunculales</taxon>
        <taxon>Ranunculaceae</taxon>
        <taxon>Thalictroideae</taxon>
        <taxon>Thalictrum</taxon>
    </lineage>
</organism>
<proteinExistence type="evidence at protein level"/>
<keyword id="KW-0002">3D-structure</keyword>
<keyword id="KW-0963">Cytoplasm</keyword>
<keyword id="KW-0489">Methyltransferase</keyword>
<keyword id="KW-0949">S-adenosyl-L-methionine</keyword>
<keyword id="KW-0808">Transferase</keyword>
<name>PNMT_THLFG</name>
<evidence type="ECO:0000250" key="1">
    <source>
        <dbReference type="UniProtKB" id="P9WPB7"/>
    </source>
</evidence>
<evidence type="ECO:0000269" key="2">
    <source>
    </source>
</evidence>
<evidence type="ECO:0000269" key="3">
    <source>
    </source>
</evidence>
<evidence type="ECO:0000303" key="4">
    <source>
    </source>
</evidence>
<evidence type="ECO:0000305" key="5"/>
<evidence type="ECO:0000305" key="6">
    <source>
    </source>
</evidence>
<evidence type="ECO:0000305" key="7">
    <source>
    </source>
</evidence>
<evidence type="ECO:0007744" key="8">
    <source>
        <dbReference type="PDB" id="5KN4"/>
    </source>
</evidence>
<evidence type="ECO:0007744" key="9">
    <source>
        <dbReference type="PDB" id="5KOC"/>
    </source>
</evidence>
<evidence type="ECO:0007744" key="10">
    <source>
        <dbReference type="PDB" id="5KOK"/>
    </source>
</evidence>
<evidence type="ECO:0007744" key="11">
    <source>
        <dbReference type="PDB" id="5KPC"/>
    </source>
</evidence>
<evidence type="ECO:0007744" key="12">
    <source>
        <dbReference type="PDB" id="5KPG"/>
    </source>
</evidence>
<evidence type="ECO:0007829" key="13">
    <source>
        <dbReference type="PDB" id="5KOK"/>
    </source>
</evidence>
<evidence type="ECO:0007829" key="14">
    <source>
        <dbReference type="PDB" id="5KPC"/>
    </source>
</evidence>
<evidence type="ECO:0007829" key="15">
    <source>
        <dbReference type="PDB" id="5KPG"/>
    </source>
</evidence>
<sequence length="356" mass="41556">METKQTKKEAVANLIKRIEHGEVSDEEIRGMMKIQVQKRLKWGYKPTHEQQLAQLVTFAQSLKGMEMAEEVDTLDAELYEIPLPFLHIMCGKTLKFSPGYFKDESTTLDESEVYMMDLYCERAQIKDGQSILDLGCGHGSLTLHVAQKYRGCKVTGITNSVSQKEFIMDQCKKLDLSNVEIILEDVTKFETEITYDRIFAVALIEHMKNYELFLKKVSTWIAQYGLLFVEHHCHKVFAYQYEPLDEDDWYTEYIFPSGTLVMSSSSILLYFQEDVSVVNHWTLSGKHPSLGFKQWLKRLDDNIDEVKEIFESFYGSKEKAMKFITYWRVFCIAHSQMYSTNNGEEWMLSQVLFKKK</sequence>